<gene>
    <name type="primary">Gpha2</name>
    <name type="synonym">Gpa2</name>
    <name type="synonym">Zsig51</name>
</gene>
<organism>
    <name type="scientific">Mus musculus</name>
    <name type="common">Mouse</name>
    <dbReference type="NCBI Taxonomy" id="10090"/>
    <lineage>
        <taxon>Eukaryota</taxon>
        <taxon>Metazoa</taxon>
        <taxon>Chordata</taxon>
        <taxon>Craniata</taxon>
        <taxon>Vertebrata</taxon>
        <taxon>Euteleostomi</taxon>
        <taxon>Mammalia</taxon>
        <taxon>Eutheria</taxon>
        <taxon>Euarchontoglires</taxon>
        <taxon>Glires</taxon>
        <taxon>Rodentia</taxon>
        <taxon>Myomorpha</taxon>
        <taxon>Muroidea</taxon>
        <taxon>Muridae</taxon>
        <taxon>Murinae</taxon>
        <taxon>Mus</taxon>
        <taxon>Mus</taxon>
    </lineage>
</organism>
<sequence>MPMAPRVLLLCLLGLAVTEGHSPETAIPGCHLHPFNVTVRSDRLGTCQGSHVAQACVGHCESSAFPSRYSVLVASGYRHNITSSSQCCTISSLRKVRVWLQCVGNQRGELEIFTARACQCDMCRFSRY</sequence>
<protein>
    <recommendedName>
        <fullName>Glycoprotein hormone alpha-2</fullName>
    </recommendedName>
    <alternativeName>
        <fullName>Putative secreted protein Zsig51</fullName>
    </alternativeName>
    <alternativeName>
        <fullName>Thyrostimulin subunit alpha</fullName>
    </alternativeName>
</protein>
<proteinExistence type="evidence at transcript level"/>
<comment type="function">
    <text evidence="2">Functions as a heterodimeric glycoprotein hormone with GPHB5 able to bind and activate the thyroid-stimulating hormone receptor (TSHR), leading to increased cAMP production. Plays a central role in controlling thyroid cell metabolism.</text>
</comment>
<comment type="subunit">
    <text evidence="2">Heterodimer with GPHB5; this heterodimer interacts with thyroid-stimulating hormone receptor (TSHR), and hence stimulates cAMP production.</text>
</comment>
<comment type="subcellular location">
    <subcellularLocation>
        <location evidence="1">Secreted</location>
    </subcellularLocation>
</comment>
<comment type="similarity">
    <text evidence="5">Belongs to the glycoprotein hormones subunit alpha family.</text>
</comment>
<feature type="signal peptide" evidence="3">
    <location>
        <begin position="1"/>
        <end position="20"/>
    </location>
</feature>
<feature type="chain" id="PRO_0000011673" description="Glycoprotein hormone alpha-2">
    <location>
        <begin position="21"/>
        <end position="128"/>
    </location>
</feature>
<feature type="glycosylation site" description="N-linked (GlcNAc...) asparagine" evidence="3">
    <location>
        <position position="36"/>
    </location>
</feature>
<feature type="glycosylation site" description="N-linked (GlcNAc...) asparagine" evidence="3">
    <location>
        <position position="80"/>
    </location>
</feature>
<feature type="disulfide bond" evidence="4">
    <location>
        <begin position="30"/>
        <end position="88"/>
    </location>
</feature>
<feature type="disulfide bond" evidence="4">
    <location>
        <begin position="47"/>
        <end position="102"/>
    </location>
</feature>
<feature type="disulfide bond" evidence="4">
    <location>
        <begin position="56"/>
        <end position="118"/>
    </location>
</feature>
<feature type="disulfide bond" evidence="4">
    <location>
        <begin position="60"/>
        <end position="120"/>
    </location>
</feature>
<keyword id="KW-1015">Disulfide bond</keyword>
<keyword id="KW-0325">Glycoprotein</keyword>
<keyword id="KW-0372">Hormone</keyword>
<keyword id="KW-1185">Reference proteome</keyword>
<keyword id="KW-0964">Secreted</keyword>
<keyword id="KW-0732">Signal</keyword>
<accession>Q925Q5</accession>
<evidence type="ECO:0000250" key="1"/>
<evidence type="ECO:0000250" key="2">
    <source>
        <dbReference type="UniProtKB" id="Q96T91"/>
    </source>
</evidence>
<evidence type="ECO:0000255" key="3"/>
<evidence type="ECO:0000255" key="4">
    <source>
        <dbReference type="PROSITE-ProRule" id="PRU00039"/>
    </source>
</evidence>
<evidence type="ECO:0000305" key="5"/>
<dbReference type="EMBL" id="AF260740">
    <property type="protein sequence ID" value="AAK51639.1"/>
    <property type="molecule type" value="mRNA"/>
</dbReference>
<dbReference type="EMBL" id="BC062804">
    <property type="protein sequence ID" value="AAH62804.1"/>
    <property type="molecule type" value="mRNA"/>
</dbReference>
<dbReference type="CCDS" id="CCDS29498.1"/>
<dbReference type="RefSeq" id="NP_569720.1">
    <property type="nucleotide sequence ID" value="NM_130453.3"/>
</dbReference>
<dbReference type="FunCoup" id="Q925Q5">
    <property type="interactions" value="972"/>
</dbReference>
<dbReference type="STRING" id="10090.ENSMUSP00000109154"/>
<dbReference type="GlyCosmos" id="Q925Q5">
    <property type="glycosylation" value="2 sites, No reported glycans"/>
</dbReference>
<dbReference type="GlyGen" id="Q925Q5">
    <property type="glycosylation" value="2 sites"/>
</dbReference>
<dbReference type="SwissPalm" id="Q925Q5"/>
<dbReference type="PaxDb" id="10090-ENSMUSP00000025698"/>
<dbReference type="Antibodypedia" id="65614">
    <property type="antibodies" value="42 antibodies from 10 providers"/>
</dbReference>
<dbReference type="Ensembl" id="ENSMUST00000025698.14">
    <property type="protein sequence ID" value="ENSMUSP00000025698.8"/>
    <property type="gene ID" value="ENSMUSG00000024784.14"/>
</dbReference>
<dbReference type="Ensembl" id="ENSMUST00000113526.2">
    <property type="protein sequence ID" value="ENSMUSP00000109154.2"/>
    <property type="gene ID" value="ENSMUSG00000024784.14"/>
</dbReference>
<dbReference type="GeneID" id="170458"/>
<dbReference type="KEGG" id="mmu:170458"/>
<dbReference type="UCSC" id="uc008ghs.1">
    <property type="organism name" value="mouse"/>
</dbReference>
<dbReference type="AGR" id="MGI:2156541"/>
<dbReference type="CTD" id="170589"/>
<dbReference type="MGI" id="MGI:2156541">
    <property type="gene designation" value="Gpha2"/>
</dbReference>
<dbReference type="VEuPathDB" id="HostDB:ENSMUSG00000024784"/>
<dbReference type="eggNOG" id="ENOG502S2RQ">
    <property type="taxonomic scope" value="Eukaryota"/>
</dbReference>
<dbReference type="GeneTree" id="ENSGT00390000009379"/>
<dbReference type="HOGENOM" id="CLU_134026_1_0_1"/>
<dbReference type="InParanoid" id="Q925Q5"/>
<dbReference type="OMA" id="CTISKMQ"/>
<dbReference type="OrthoDB" id="9413153at2759"/>
<dbReference type="PhylomeDB" id="Q925Q5"/>
<dbReference type="TreeFam" id="TF332313"/>
<dbReference type="Reactome" id="R-MMU-375281">
    <property type="pathway name" value="Hormone ligand-binding receptors"/>
</dbReference>
<dbReference type="Reactome" id="R-MMU-418555">
    <property type="pathway name" value="G alpha (s) signalling events"/>
</dbReference>
<dbReference type="BioGRID-ORCS" id="170458">
    <property type="hits" value="1 hit in 77 CRISPR screens"/>
</dbReference>
<dbReference type="PRO" id="PR:Q925Q5"/>
<dbReference type="Proteomes" id="UP000000589">
    <property type="component" value="Chromosome 19"/>
</dbReference>
<dbReference type="RNAct" id="Q925Q5">
    <property type="molecule type" value="protein"/>
</dbReference>
<dbReference type="Bgee" id="ENSMUSG00000024784">
    <property type="expression patterns" value="Expressed in adrenal gland and 41 other cell types or tissues"/>
</dbReference>
<dbReference type="ExpressionAtlas" id="Q925Q5">
    <property type="expression patterns" value="baseline and differential"/>
</dbReference>
<dbReference type="GO" id="GO:0005576">
    <property type="term" value="C:extracellular region"/>
    <property type="evidence" value="ECO:0000266"/>
    <property type="project" value="MGI"/>
</dbReference>
<dbReference type="GO" id="GO:0005179">
    <property type="term" value="F:hormone activity"/>
    <property type="evidence" value="ECO:0007669"/>
    <property type="project" value="UniProtKB-KW"/>
</dbReference>
<dbReference type="GO" id="GO:0046982">
    <property type="term" value="F:protein heterodimerization activity"/>
    <property type="evidence" value="ECO:0007669"/>
    <property type="project" value="Ensembl"/>
</dbReference>
<dbReference type="GO" id="GO:0031531">
    <property type="term" value="F:thyrotropin-releasing hormone receptor binding"/>
    <property type="evidence" value="ECO:0007669"/>
    <property type="project" value="Ensembl"/>
</dbReference>
<dbReference type="GO" id="GO:0007189">
    <property type="term" value="P:adenylate cyclase-activating G protein-coupled receptor signaling pathway"/>
    <property type="evidence" value="ECO:0007669"/>
    <property type="project" value="Ensembl"/>
</dbReference>
<dbReference type="GO" id="GO:0007166">
    <property type="term" value="P:cell surface receptor signaling pathway"/>
    <property type="evidence" value="ECO:0007669"/>
    <property type="project" value="Ensembl"/>
</dbReference>
<dbReference type="GO" id="GO:0009966">
    <property type="term" value="P:regulation of signal transduction"/>
    <property type="evidence" value="ECO:0007669"/>
    <property type="project" value="UniProtKB-ARBA"/>
</dbReference>
<dbReference type="FunFam" id="2.10.90.10:FF:000027">
    <property type="entry name" value="Glycoprotein hormone alpha 2"/>
    <property type="match status" value="1"/>
</dbReference>
<dbReference type="Gene3D" id="2.10.90.10">
    <property type="entry name" value="Cystine-knot cytokines"/>
    <property type="match status" value="1"/>
</dbReference>
<dbReference type="InterPro" id="IPR006207">
    <property type="entry name" value="Cys_knot_C"/>
</dbReference>
<dbReference type="InterPro" id="IPR029034">
    <property type="entry name" value="Cystine-knot_cytokine"/>
</dbReference>
<dbReference type="InterPro" id="IPR000476">
    <property type="entry name" value="Glyco_hormone"/>
</dbReference>
<dbReference type="InterPro" id="IPR052680">
    <property type="entry name" value="Glyco_Hormone_Alpha"/>
</dbReference>
<dbReference type="PANTHER" id="PTHR31129">
    <property type="entry name" value="GLYCOPROTEIN HORMONE ALPHA-2"/>
    <property type="match status" value="1"/>
</dbReference>
<dbReference type="PANTHER" id="PTHR31129:SF2">
    <property type="entry name" value="GLYCOPROTEIN HORMONE ALPHA-2"/>
    <property type="match status" value="1"/>
</dbReference>
<dbReference type="SUPFAM" id="SSF57501">
    <property type="entry name" value="Cystine-knot cytokines"/>
    <property type="match status" value="1"/>
</dbReference>
<dbReference type="PROSITE" id="PS01185">
    <property type="entry name" value="CTCK_1"/>
    <property type="match status" value="1"/>
</dbReference>
<dbReference type="PROSITE" id="PS01225">
    <property type="entry name" value="CTCK_2"/>
    <property type="match status" value="1"/>
</dbReference>
<dbReference type="PROSITE" id="PS50277">
    <property type="entry name" value="GLYCO_HORMONE_ALPHA_3"/>
    <property type="match status" value="1"/>
</dbReference>
<name>GPHA2_MOUSE</name>
<reference key="1">
    <citation type="submission" date="2000-04" db="EMBL/GenBank/DDBJ databases">
        <title>A novel cysteine knot protein expressed in pancreatic acinar cells.</title>
        <authorList>
            <person name="Ching A."/>
            <person name="Gilbert T."/>
            <person name="Sheppard P."/>
            <person name="Webster P."/>
            <person name="O'Hara P.J."/>
        </authorList>
    </citation>
    <scope>NUCLEOTIDE SEQUENCE [MRNA]</scope>
</reference>
<reference key="2">
    <citation type="journal article" date="2004" name="Genome Res.">
        <title>The status, quality, and expansion of the NIH full-length cDNA project: the Mammalian Gene Collection (MGC).</title>
        <authorList>
            <consortium name="The MGC Project Team"/>
        </authorList>
    </citation>
    <scope>NUCLEOTIDE SEQUENCE [LARGE SCALE MRNA]</scope>
    <source>
        <strain>C57BL/6J</strain>
        <tissue>Thymus</tissue>
    </source>
</reference>